<protein>
    <recommendedName>
        <fullName>A-kinase-interacting protein 1</fullName>
    </recommendedName>
    <alternativeName>
        <fullName>Breast cancer-associated gene 3 protein</fullName>
    </alternativeName>
    <alternativeName>
        <fullName>PKA-interacting protein</fullName>
    </alternativeName>
    <alternativeName>
        <fullName>Proline-rich protein BCA3</fullName>
    </alternativeName>
</protein>
<feature type="chain" id="PRO_0000064858" description="A-kinase-interacting protein 1">
    <location>
        <begin position="1"/>
        <end position="212"/>
    </location>
</feature>
<proteinExistence type="evidence at transcript level"/>
<accession>Q9JJR5</accession>
<accession>Q3TR76</accession>
<reference key="1">
    <citation type="journal article" date="2001" name="Cytogenet. Cell Genet.">
        <title>Comparative genomic sequencing reveals a strikingly similar architecture of a conserved syntenic region on human chromosome 11p15.3 (including gene ST5) and mouse chromosome 7.</title>
        <authorList>
            <person name="Amid C."/>
            <person name="Bahr A."/>
            <person name="Mujica A."/>
            <person name="Sampson N."/>
            <person name="Bikar S.E."/>
            <person name="Winterpacht A."/>
            <person name="Zabel B."/>
            <person name="Hankeln T."/>
            <person name="Schmidt E.R."/>
        </authorList>
    </citation>
    <scope>NUCLEOTIDE SEQUENCE [GENOMIC DNA]</scope>
</reference>
<reference key="2">
    <citation type="journal article" date="2005" name="Science">
        <title>The transcriptional landscape of the mammalian genome.</title>
        <authorList>
            <person name="Carninci P."/>
            <person name="Kasukawa T."/>
            <person name="Katayama S."/>
            <person name="Gough J."/>
            <person name="Frith M.C."/>
            <person name="Maeda N."/>
            <person name="Oyama R."/>
            <person name="Ravasi T."/>
            <person name="Lenhard B."/>
            <person name="Wells C."/>
            <person name="Kodzius R."/>
            <person name="Shimokawa K."/>
            <person name="Bajic V.B."/>
            <person name="Brenner S.E."/>
            <person name="Batalov S."/>
            <person name="Forrest A.R."/>
            <person name="Zavolan M."/>
            <person name="Davis M.J."/>
            <person name="Wilming L.G."/>
            <person name="Aidinis V."/>
            <person name="Allen J.E."/>
            <person name="Ambesi-Impiombato A."/>
            <person name="Apweiler R."/>
            <person name="Aturaliya R.N."/>
            <person name="Bailey T.L."/>
            <person name="Bansal M."/>
            <person name="Baxter L."/>
            <person name="Beisel K.W."/>
            <person name="Bersano T."/>
            <person name="Bono H."/>
            <person name="Chalk A.M."/>
            <person name="Chiu K.P."/>
            <person name="Choudhary V."/>
            <person name="Christoffels A."/>
            <person name="Clutterbuck D.R."/>
            <person name="Crowe M.L."/>
            <person name="Dalla E."/>
            <person name="Dalrymple B.P."/>
            <person name="de Bono B."/>
            <person name="Della Gatta G."/>
            <person name="di Bernardo D."/>
            <person name="Down T."/>
            <person name="Engstrom P."/>
            <person name="Fagiolini M."/>
            <person name="Faulkner G."/>
            <person name="Fletcher C.F."/>
            <person name="Fukushima T."/>
            <person name="Furuno M."/>
            <person name="Futaki S."/>
            <person name="Gariboldi M."/>
            <person name="Georgii-Hemming P."/>
            <person name="Gingeras T.R."/>
            <person name="Gojobori T."/>
            <person name="Green R.E."/>
            <person name="Gustincich S."/>
            <person name="Harbers M."/>
            <person name="Hayashi Y."/>
            <person name="Hensch T.K."/>
            <person name="Hirokawa N."/>
            <person name="Hill D."/>
            <person name="Huminiecki L."/>
            <person name="Iacono M."/>
            <person name="Ikeo K."/>
            <person name="Iwama A."/>
            <person name="Ishikawa T."/>
            <person name="Jakt M."/>
            <person name="Kanapin A."/>
            <person name="Katoh M."/>
            <person name="Kawasawa Y."/>
            <person name="Kelso J."/>
            <person name="Kitamura H."/>
            <person name="Kitano H."/>
            <person name="Kollias G."/>
            <person name="Krishnan S.P."/>
            <person name="Kruger A."/>
            <person name="Kummerfeld S.K."/>
            <person name="Kurochkin I.V."/>
            <person name="Lareau L.F."/>
            <person name="Lazarevic D."/>
            <person name="Lipovich L."/>
            <person name="Liu J."/>
            <person name="Liuni S."/>
            <person name="McWilliam S."/>
            <person name="Madan Babu M."/>
            <person name="Madera M."/>
            <person name="Marchionni L."/>
            <person name="Matsuda H."/>
            <person name="Matsuzawa S."/>
            <person name="Miki H."/>
            <person name="Mignone F."/>
            <person name="Miyake S."/>
            <person name="Morris K."/>
            <person name="Mottagui-Tabar S."/>
            <person name="Mulder N."/>
            <person name="Nakano N."/>
            <person name="Nakauchi H."/>
            <person name="Ng P."/>
            <person name="Nilsson R."/>
            <person name="Nishiguchi S."/>
            <person name="Nishikawa S."/>
            <person name="Nori F."/>
            <person name="Ohara O."/>
            <person name="Okazaki Y."/>
            <person name="Orlando V."/>
            <person name="Pang K.C."/>
            <person name="Pavan W.J."/>
            <person name="Pavesi G."/>
            <person name="Pesole G."/>
            <person name="Petrovsky N."/>
            <person name="Piazza S."/>
            <person name="Reed J."/>
            <person name="Reid J.F."/>
            <person name="Ring B.Z."/>
            <person name="Ringwald M."/>
            <person name="Rost B."/>
            <person name="Ruan Y."/>
            <person name="Salzberg S.L."/>
            <person name="Sandelin A."/>
            <person name="Schneider C."/>
            <person name="Schoenbach C."/>
            <person name="Sekiguchi K."/>
            <person name="Semple C.A."/>
            <person name="Seno S."/>
            <person name="Sessa L."/>
            <person name="Sheng Y."/>
            <person name="Shibata Y."/>
            <person name="Shimada H."/>
            <person name="Shimada K."/>
            <person name="Silva D."/>
            <person name="Sinclair B."/>
            <person name="Sperling S."/>
            <person name="Stupka E."/>
            <person name="Sugiura K."/>
            <person name="Sultana R."/>
            <person name="Takenaka Y."/>
            <person name="Taki K."/>
            <person name="Tammoja K."/>
            <person name="Tan S.L."/>
            <person name="Tang S."/>
            <person name="Taylor M.S."/>
            <person name="Tegner J."/>
            <person name="Teichmann S.A."/>
            <person name="Ueda H.R."/>
            <person name="van Nimwegen E."/>
            <person name="Verardo R."/>
            <person name="Wei C.L."/>
            <person name="Yagi K."/>
            <person name="Yamanishi H."/>
            <person name="Zabarovsky E."/>
            <person name="Zhu S."/>
            <person name="Zimmer A."/>
            <person name="Hide W."/>
            <person name="Bult C."/>
            <person name="Grimmond S.M."/>
            <person name="Teasdale R.D."/>
            <person name="Liu E.T."/>
            <person name="Brusic V."/>
            <person name="Quackenbush J."/>
            <person name="Wahlestedt C."/>
            <person name="Mattick J.S."/>
            <person name="Hume D.A."/>
            <person name="Kai C."/>
            <person name="Sasaki D."/>
            <person name="Tomaru Y."/>
            <person name="Fukuda S."/>
            <person name="Kanamori-Katayama M."/>
            <person name="Suzuki M."/>
            <person name="Aoki J."/>
            <person name="Arakawa T."/>
            <person name="Iida J."/>
            <person name="Imamura K."/>
            <person name="Itoh M."/>
            <person name="Kato T."/>
            <person name="Kawaji H."/>
            <person name="Kawagashira N."/>
            <person name="Kawashima T."/>
            <person name="Kojima M."/>
            <person name="Kondo S."/>
            <person name="Konno H."/>
            <person name="Nakano K."/>
            <person name="Ninomiya N."/>
            <person name="Nishio T."/>
            <person name="Okada M."/>
            <person name="Plessy C."/>
            <person name="Shibata K."/>
            <person name="Shiraki T."/>
            <person name="Suzuki S."/>
            <person name="Tagami M."/>
            <person name="Waki K."/>
            <person name="Watahiki A."/>
            <person name="Okamura-Oho Y."/>
            <person name="Suzuki H."/>
            <person name="Kawai J."/>
            <person name="Hayashizaki Y."/>
        </authorList>
    </citation>
    <scope>NUCLEOTIDE SEQUENCE [LARGE SCALE MRNA]</scope>
    <source>
        <strain>C57BL/6J</strain>
        <tissue>Head</tissue>
        <tissue>Thymus</tissue>
    </source>
</reference>
<sequence>MEYCLAAAALNGVDRRSLQRSARLGREVLERAKRRAVDWHSPERSRGNVGVLYRQGPYQERWSVPGSQRLLGEREERCPTLSSSFGAMAEFMDYTSSQCGKYYLSMPEEGGATHVYRYHRRKPPEMHMYSDTGHSQEQRNCRGETSVGQESIYQTSEHSQESSWPTENISKDLYIEVYPGTYSVTVGSSALSKKTHVVAVDPGQSVDLVFPV</sequence>
<gene>
    <name type="primary">Akip1</name>
    <name type="synonym">Bca3</name>
</gene>
<keyword id="KW-0539">Nucleus</keyword>
<keyword id="KW-1185">Reference proteome</keyword>
<name>AKIP1_MOUSE</name>
<dbReference type="EMBL" id="AJ400878">
    <property type="protein sequence ID" value="CAB92298.1"/>
    <property type="molecule type" value="Genomic_DNA"/>
</dbReference>
<dbReference type="EMBL" id="AK086219">
    <property type="protein sequence ID" value="BAC39632.1"/>
    <property type="molecule type" value="mRNA"/>
</dbReference>
<dbReference type="EMBL" id="AK163012">
    <property type="protein sequence ID" value="BAE37154.1"/>
    <property type="molecule type" value="mRNA"/>
</dbReference>
<dbReference type="CCDS" id="CCDS21736.1"/>
<dbReference type="RefSeq" id="NP_065641.1">
    <property type="nucleotide sequence ID" value="NM_020616.2"/>
</dbReference>
<dbReference type="RefSeq" id="XP_030098686.1">
    <property type="nucleotide sequence ID" value="XM_030242826.2"/>
</dbReference>
<dbReference type="BioGRID" id="208274">
    <property type="interactions" value="1"/>
</dbReference>
<dbReference type="FunCoup" id="Q9JJR5">
    <property type="interactions" value="2350"/>
</dbReference>
<dbReference type="STRING" id="10090.ENSMUSP00000033335"/>
<dbReference type="GlyGen" id="Q9JJR5">
    <property type="glycosylation" value="1 site"/>
</dbReference>
<dbReference type="iPTMnet" id="Q9JJR5"/>
<dbReference type="PhosphoSitePlus" id="Q9JJR5"/>
<dbReference type="PaxDb" id="10090-ENSMUSP00000033335"/>
<dbReference type="ProteomicsDB" id="296151"/>
<dbReference type="Antibodypedia" id="24164">
    <property type="antibodies" value="240 antibodies from 26 providers"/>
</dbReference>
<dbReference type="DNASU" id="57373"/>
<dbReference type="Ensembl" id="ENSMUST00000033335.6">
    <property type="protein sequence ID" value="ENSMUSP00000033335.6"/>
    <property type="gene ID" value="ENSMUSG00000031023.6"/>
</dbReference>
<dbReference type="GeneID" id="57373"/>
<dbReference type="KEGG" id="mmu:57373"/>
<dbReference type="UCSC" id="uc009jdy.1">
    <property type="organism name" value="mouse"/>
</dbReference>
<dbReference type="AGR" id="MGI:3041226"/>
<dbReference type="CTD" id="56672"/>
<dbReference type="MGI" id="MGI:3041226">
    <property type="gene designation" value="Akip1"/>
</dbReference>
<dbReference type="VEuPathDB" id="HostDB:ENSMUSG00000031023"/>
<dbReference type="eggNOG" id="ENOG502S6M5">
    <property type="taxonomic scope" value="Eukaryota"/>
</dbReference>
<dbReference type="GeneTree" id="ENSGT00390000017064"/>
<dbReference type="HOGENOM" id="CLU_126629_1_0_1"/>
<dbReference type="InParanoid" id="Q9JJR5"/>
<dbReference type="OMA" id="RIMAEFM"/>
<dbReference type="OrthoDB" id="5945634at2759"/>
<dbReference type="PhylomeDB" id="Q9JJR5"/>
<dbReference type="TreeFam" id="TF337318"/>
<dbReference type="BioGRID-ORCS" id="57373">
    <property type="hits" value="2 hits in 76 CRISPR screens"/>
</dbReference>
<dbReference type="ChiTaRS" id="Akip1">
    <property type="organism name" value="mouse"/>
</dbReference>
<dbReference type="PRO" id="PR:Q9JJR5"/>
<dbReference type="Proteomes" id="UP000000589">
    <property type="component" value="Chromosome 7"/>
</dbReference>
<dbReference type="RNAct" id="Q9JJR5">
    <property type="molecule type" value="protein"/>
</dbReference>
<dbReference type="Bgee" id="ENSMUSG00000031023">
    <property type="expression patterns" value="Expressed in right kidney and 225 other cell types or tissues"/>
</dbReference>
<dbReference type="ExpressionAtlas" id="Q9JJR5">
    <property type="expression patterns" value="baseline and differential"/>
</dbReference>
<dbReference type="GO" id="GO:0005654">
    <property type="term" value="C:nucleoplasm"/>
    <property type="evidence" value="ECO:0007669"/>
    <property type="project" value="Ensembl"/>
</dbReference>
<dbReference type="GO" id="GO:0005634">
    <property type="term" value="C:nucleus"/>
    <property type="evidence" value="ECO:0000266"/>
    <property type="project" value="MGI"/>
</dbReference>
<dbReference type="GO" id="GO:0048471">
    <property type="term" value="C:perinuclear region of cytoplasm"/>
    <property type="evidence" value="ECO:0000266"/>
    <property type="project" value="MGI"/>
</dbReference>
<dbReference type="GO" id="GO:1901222">
    <property type="term" value="P:regulation of non-canonical NF-kappaB signal transduction"/>
    <property type="evidence" value="ECO:0007669"/>
    <property type="project" value="InterPro"/>
</dbReference>
<dbReference type="GO" id="GO:0034446">
    <property type="term" value="P:substrate adhesion-dependent cell spreading"/>
    <property type="evidence" value="ECO:0000316"/>
    <property type="project" value="MGI"/>
</dbReference>
<dbReference type="InterPro" id="IPR033214">
    <property type="entry name" value="AKIP1"/>
</dbReference>
<dbReference type="PANTHER" id="PTHR14330">
    <property type="entry name" value="A-KINASE-INTERACTING PROTEIN 1"/>
    <property type="match status" value="1"/>
</dbReference>
<dbReference type="PANTHER" id="PTHR14330:SF2">
    <property type="entry name" value="A-KINASE-INTERACTING PROTEIN 1"/>
    <property type="match status" value="1"/>
</dbReference>
<evidence type="ECO:0000250" key="1"/>
<comment type="function">
    <text evidence="1">Enhances NF-kappa-B transcriptional activity by regulating the nuclear localization of the NF-kappa-B subunit RELA and promoting the phosphorylation of RELA by PRKACA. Regulates the effect of the cAMP-dependent protein kinase signaling pathway on the NF-kappa-B activation cascade (By similarity).</text>
</comment>
<comment type="subunit">
    <text evidence="1">Interacts with PRKACA and RELA.</text>
</comment>
<comment type="subcellular location">
    <subcellularLocation>
        <location evidence="1">Nucleus</location>
    </subcellularLocation>
    <text evidence="1">Locates to punctate spots.</text>
</comment>
<organism>
    <name type="scientific">Mus musculus</name>
    <name type="common">Mouse</name>
    <dbReference type="NCBI Taxonomy" id="10090"/>
    <lineage>
        <taxon>Eukaryota</taxon>
        <taxon>Metazoa</taxon>
        <taxon>Chordata</taxon>
        <taxon>Craniata</taxon>
        <taxon>Vertebrata</taxon>
        <taxon>Euteleostomi</taxon>
        <taxon>Mammalia</taxon>
        <taxon>Eutheria</taxon>
        <taxon>Euarchontoglires</taxon>
        <taxon>Glires</taxon>
        <taxon>Rodentia</taxon>
        <taxon>Myomorpha</taxon>
        <taxon>Muroidea</taxon>
        <taxon>Muridae</taxon>
        <taxon>Murinae</taxon>
        <taxon>Mus</taxon>
        <taxon>Mus</taxon>
    </lineage>
</organism>